<reference key="1">
    <citation type="journal article" date="2003" name="Nature">
        <title>Genome sequence of Bacillus cereus and comparative analysis with Bacillus anthracis.</title>
        <authorList>
            <person name="Ivanova N."/>
            <person name="Sorokin A."/>
            <person name="Anderson I."/>
            <person name="Galleron N."/>
            <person name="Candelon B."/>
            <person name="Kapatral V."/>
            <person name="Bhattacharyya A."/>
            <person name="Reznik G."/>
            <person name="Mikhailova N."/>
            <person name="Lapidus A."/>
            <person name="Chu L."/>
            <person name="Mazur M."/>
            <person name="Goltsman E."/>
            <person name="Larsen N."/>
            <person name="D'Souza M."/>
            <person name="Walunas T."/>
            <person name="Grechkin Y."/>
            <person name="Pusch G."/>
            <person name="Haselkorn R."/>
            <person name="Fonstein M."/>
            <person name="Ehrlich S.D."/>
            <person name="Overbeek R."/>
            <person name="Kyrpides N.C."/>
        </authorList>
    </citation>
    <scope>NUCLEOTIDE SEQUENCE [LARGE SCALE GENOMIC DNA]</scope>
    <source>
        <strain>ATCC 14579 / DSM 31 / CCUG 7414 / JCM 2152 / NBRC 15305 / NCIMB 9373 / NCTC 2599 / NRRL B-3711</strain>
    </source>
</reference>
<proteinExistence type="inferred from homology"/>
<feature type="chain" id="PRO_0000376432" description="Probable cell division protein WhiA">
    <location>
        <begin position="1"/>
        <end position="316"/>
    </location>
</feature>
<feature type="DNA-binding region" description="H-T-H motif" evidence="1">
    <location>
        <begin position="275"/>
        <end position="309"/>
    </location>
</feature>
<gene>
    <name evidence="1" type="primary">whiA</name>
    <name type="ordered locus">BC_5154</name>
</gene>
<accession>Q812J8</accession>
<organism>
    <name type="scientific">Bacillus cereus (strain ATCC 14579 / DSM 31 / CCUG 7414 / JCM 2152 / NBRC 15305 / NCIMB 9373 / NCTC 2599 / NRRL B-3711)</name>
    <dbReference type="NCBI Taxonomy" id="226900"/>
    <lineage>
        <taxon>Bacteria</taxon>
        <taxon>Bacillati</taxon>
        <taxon>Bacillota</taxon>
        <taxon>Bacilli</taxon>
        <taxon>Bacillales</taxon>
        <taxon>Bacillaceae</taxon>
        <taxon>Bacillus</taxon>
        <taxon>Bacillus cereus group</taxon>
    </lineage>
</organism>
<evidence type="ECO:0000255" key="1">
    <source>
        <dbReference type="HAMAP-Rule" id="MF_01420"/>
    </source>
</evidence>
<evidence type="ECO:0000305" key="2"/>
<dbReference type="EMBL" id="AE016877">
    <property type="protein sequence ID" value="AAP12019.1"/>
    <property type="status" value="ALT_INIT"/>
    <property type="molecule type" value="Genomic_DNA"/>
</dbReference>
<dbReference type="RefSeq" id="NP_834818.1">
    <property type="nucleotide sequence ID" value="NC_004722.1"/>
</dbReference>
<dbReference type="RefSeq" id="WP_000006558.1">
    <property type="nucleotide sequence ID" value="NZ_CP138336.1"/>
</dbReference>
<dbReference type="SMR" id="Q812J8"/>
<dbReference type="STRING" id="226900.BC_5154"/>
<dbReference type="KEGG" id="bce:BC5154"/>
<dbReference type="PATRIC" id="fig|226900.8.peg.5312"/>
<dbReference type="HOGENOM" id="CLU_053282_0_0_9"/>
<dbReference type="OrthoDB" id="401278at2"/>
<dbReference type="Proteomes" id="UP000001417">
    <property type="component" value="Chromosome"/>
</dbReference>
<dbReference type="GO" id="GO:0003677">
    <property type="term" value="F:DNA binding"/>
    <property type="evidence" value="ECO:0007669"/>
    <property type="project" value="UniProtKB-UniRule"/>
</dbReference>
<dbReference type="GO" id="GO:0051301">
    <property type="term" value="P:cell division"/>
    <property type="evidence" value="ECO:0007669"/>
    <property type="project" value="UniProtKB-UniRule"/>
</dbReference>
<dbReference type="GO" id="GO:0043937">
    <property type="term" value="P:regulation of sporulation"/>
    <property type="evidence" value="ECO:0000318"/>
    <property type="project" value="GO_Central"/>
</dbReference>
<dbReference type="FunFam" id="3.10.28.10:FF:000002">
    <property type="entry name" value="Probable cell division protein WhiA"/>
    <property type="match status" value="1"/>
</dbReference>
<dbReference type="Gene3D" id="3.10.28.10">
    <property type="entry name" value="Homing endonucleases"/>
    <property type="match status" value="1"/>
</dbReference>
<dbReference type="HAMAP" id="MF_01420">
    <property type="entry name" value="HTH_type_WhiA"/>
    <property type="match status" value="1"/>
</dbReference>
<dbReference type="InterPro" id="IPR027434">
    <property type="entry name" value="Homing_endonucl"/>
</dbReference>
<dbReference type="InterPro" id="IPR018478">
    <property type="entry name" value="Sporu_reg_WhiA_N_dom"/>
</dbReference>
<dbReference type="InterPro" id="IPR003802">
    <property type="entry name" value="Sporulation_regulator_WhiA"/>
</dbReference>
<dbReference type="InterPro" id="IPR023054">
    <property type="entry name" value="Sporulation_regulator_WhiA_C"/>
</dbReference>
<dbReference type="InterPro" id="IPR039518">
    <property type="entry name" value="WhiA_LAGLIDADG_dom"/>
</dbReference>
<dbReference type="NCBIfam" id="TIGR00647">
    <property type="entry name" value="DNA_bind_WhiA"/>
    <property type="match status" value="1"/>
</dbReference>
<dbReference type="PANTHER" id="PTHR37307">
    <property type="entry name" value="CELL DIVISION PROTEIN WHIA-RELATED"/>
    <property type="match status" value="1"/>
</dbReference>
<dbReference type="PANTHER" id="PTHR37307:SF1">
    <property type="entry name" value="CELL DIVISION PROTEIN WHIA-RELATED"/>
    <property type="match status" value="1"/>
</dbReference>
<dbReference type="Pfam" id="PF02650">
    <property type="entry name" value="HTH_WhiA"/>
    <property type="match status" value="1"/>
</dbReference>
<dbReference type="Pfam" id="PF14527">
    <property type="entry name" value="LAGLIDADG_WhiA"/>
    <property type="match status" value="1"/>
</dbReference>
<dbReference type="Pfam" id="PF10298">
    <property type="entry name" value="WhiA_N"/>
    <property type="match status" value="1"/>
</dbReference>
<dbReference type="SUPFAM" id="SSF55608">
    <property type="entry name" value="Homing endonucleases"/>
    <property type="match status" value="1"/>
</dbReference>
<keyword id="KW-0131">Cell cycle</keyword>
<keyword id="KW-0132">Cell division</keyword>
<keyword id="KW-0238">DNA-binding</keyword>
<keyword id="KW-1185">Reference proteome</keyword>
<sequence>MSFASETKKELTNLEMKECCEKAELSALLRMNGSLSFSNRRLSIDIQTENAAIARRIYTLLKKGYDVTVELLVRKKMRLKKNNVYIVRLVEKSREILADLHIVRDDFSFIRNISQELIEKKCCKRSYLRGAFLAGGSVNNPETSSYHLEIFSLYKEHNDAICELMNGFDLNSKTLERRKGYITYLKEAEKITEFLNIIGAHNALLRFEDIRIVRDMRNSVNRLVNCETANLNKTIGAALRQIENIRYIDETVGLDILPDKLQEIAQLRRDYQDVTLKELGEMVSGGKISKSGINHRLRKIDEIAEKLRAGETLVKK</sequence>
<name>WHIA_BACCR</name>
<protein>
    <recommendedName>
        <fullName evidence="1">Probable cell division protein WhiA</fullName>
    </recommendedName>
</protein>
<comment type="function">
    <text evidence="1">Involved in cell division and chromosome segregation.</text>
</comment>
<comment type="similarity">
    <text evidence="1">Belongs to the WhiA family.</text>
</comment>
<comment type="sequence caution" evidence="2">
    <conflict type="erroneous initiation">
        <sequence resource="EMBL-CDS" id="AAP12019"/>
    </conflict>
</comment>